<name>SYS_PSYA2</name>
<reference key="1">
    <citation type="journal article" date="2010" name="Appl. Environ. Microbiol.">
        <title>The genome sequence of Psychrobacter arcticus 273-4, a psychroactive Siberian permafrost bacterium, reveals mechanisms for adaptation to low-temperature growth.</title>
        <authorList>
            <person name="Ayala-del-Rio H.L."/>
            <person name="Chain P.S."/>
            <person name="Grzymski J.J."/>
            <person name="Ponder M.A."/>
            <person name="Ivanova N."/>
            <person name="Bergholz P.W."/>
            <person name="Di Bartolo G."/>
            <person name="Hauser L."/>
            <person name="Land M."/>
            <person name="Bakermans C."/>
            <person name="Rodrigues D."/>
            <person name="Klappenbach J."/>
            <person name="Zarka D."/>
            <person name="Larimer F."/>
            <person name="Richardson P."/>
            <person name="Murray A."/>
            <person name="Thomashow M."/>
            <person name="Tiedje J.M."/>
        </authorList>
    </citation>
    <scope>NUCLEOTIDE SEQUENCE [LARGE SCALE GENOMIC DNA]</scope>
    <source>
        <strain>DSM 17307 / VKM B-2377 / 273-4</strain>
    </source>
</reference>
<dbReference type="EC" id="6.1.1.11" evidence="1"/>
<dbReference type="EMBL" id="CP000082">
    <property type="protein sequence ID" value="AAZ19466.1"/>
    <property type="molecule type" value="Genomic_DNA"/>
</dbReference>
<dbReference type="RefSeq" id="WP_011280882.1">
    <property type="nucleotide sequence ID" value="NC_007204.1"/>
</dbReference>
<dbReference type="SMR" id="Q4FR92"/>
<dbReference type="STRING" id="259536.Psyc_1618"/>
<dbReference type="KEGG" id="par:Psyc_1618"/>
<dbReference type="eggNOG" id="COG0172">
    <property type="taxonomic scope" value="Bacteria"/>
</dbReference>
<dbReference type="HOGENOM" id="CLU_023797_1_1_6"/>
<dbReference type="OrthoDB" id="9804647at2"/>
<dbReference type="UniPathway" id="UPA00906">
    <property type="reaction ID" value="UER00895"/>
</dbReference>
<dbReference type="Proteomes" id="UP000000546">
    <property type="component" value="Chromosome"/>
</dbReference>
<dbReference type="GO" id="GO:0005737">
    <property type="term" value="C:cytoplasm"/>
    <property type="evidence" value="ECO:0007669"/>
    <property type="project" value="UniProtKB-SubCell"/>
</dbReference>
<dbReference type="GO" id="GO:0005524">
    <property type="term" value="F:ATP binding"/>
    <property type="evidence" value="ECO:0007669"/>
    <property type="project" value="UniProtKB-UniRule"/>
</dbReference>
<dbReference type="GO" id="GO:0004828">
    <property type="term" value="F:serine-tRNA ligase activity"/>
    <property type="evidence" value="ECO:0007669"/>
    <property type="project" value="UniProtKB-UniRule"/>
</dbReference>
<dbReference type="GO" id="GO:0016260">
    <property type="term" value="P:selenocysteine biosynthetic process"/>
    <property type="evidence" value="ECO:0007669"/>
    <property type="project" value="UniProtKB-UniRule"/>
</dbReference>
<dbReference type="GO" id="GO:0006434">
    <property type="term" value="P:seryl-tRNA aminoacylation"/>
    <property type="evidence" value="ECO:0007669"/>
    <property type="project" value="UniProtKB-UniRule"/>
</dbReference>
<dbReference type="CDD" id="cd00770">
    <property type="entry name" value="SerRS_core"/>
    <property type="match status" value="1"/>
</dbReference>
<dbReference type="Gene3D" id="3.30.930.10">
    <property type="entry name" value="Bira Bifunctional Protein, Domain 2"/>
    <property type="match status" value="1"/>
</dbReference>
<dbReference type="Gene3D" id="1.10.287.40">
    <property type="entry name" value="Serine-tRNA synthetase, tRNA binding domain"/>
    <property type="match status" value="1"/>
</dbReference>
<dbReference type="HAMAP" id="MF_00176">
    <property type="entry name" value="Ser_tRNA_synth_type1"/>
    <property type="match status" value="1"/>
</dbReference>
<dbReference type="InterPro" id="IPR002314">
    <property type="entry name" value="aa-tRNA-synt_IIb"/>
</dbReference>
<dbReference type="InterPro" id="IPR006195">
    <property type="entry name" value="aa-tRNA-synth_II"/>
</dbReference>
<dbReference type="InterPro" id="IPR045864">
    <property type="entry name" value="aa-tRNA-synth_II/BPL/LPL"/>
</dbReference>
<dbReference type="InterPro" id="IPR002317">
    <property type="entry name" value="Ser-tRNA-ligase_type_1"/>
</dbReference>
<dbReference type="InterPro" id="IPR015866">
    <property type="entry name" value="Ser-tRNA-synth_1_N"/>
</dbReference>
<dbReference type="InterPro" id="IPR042103">
    <property type="entry name" value="SerRS_1_N_sf"/>
</dbReference>
<dbReference type="InterPro" id="IPR033729">
    <property type="entry name" value="SerRS_core"/>
</dbReference>
<dbReference type="InterPro" id="IPR010978">
    <property type="entry name" value="tRNA-bd_arm"/>
</dbReference>
<dbReference type="NCBIfam" id="TIGR00414">
    <property type="entry name" value="serS"/>
    <property type="match status" value="1"/>
</dbReference>
<dbReference type="PANTHER" id="PTHR43697:SF1">
    <property type="entry name" value="SERINE--TRNA LIGASE"/>
    <property type="match status" value="1"/>
</dbReference>
<dbReference type="PANTHER" id="PTHR43697">
    <property type="entry name" value="SERYL-TRNA SYNTHETASE"/>
    <property type="match status" value="1"/>
</dbReference>
<dbReference type="Pfam" id="PF02403">
    <property type="entry name" value="Seryl_tRNA_N"/>
    <property type="match status" value="1"/>
</dbReference>
<dbReference type="Pfam" id="PF00587">
    <property type="entry name" value="tRNA-synt_2b"/>
    <property type="match status" value="1"/>
</dbReference>
<dbReference type="PIRSF" id="PIRSF001529">
    <property type="entry name" value="Ser-tRNA-synth_IIa"/>
    <property type="match status" value="1"/>
</dbReference>
<dbReference type="PRINTS" id="PR00981">
    <property type="entry name" value="TRNASYNTHSER"/>
</dbReference>
<dbReference type="SUPFAM" id="SSF55681">
    <property type="entry name" value="Class II aaRS and biotin synthetases"/>
    <property type="match status" value="1"/>
</dbReference>
<dbReference type="SUPFAM" id="SSF46589">
    <property type="entry name" value="tRNA-binding arm"/>
    <property type="match status" value="1"/>
</dbReference>
<dbReference type="PROSITE" id="PS50862">
    <property type="entry name" value="AA_TRNA_LIGASE_II"/>
    <property type="match status" value="1"/>
</dbReference>
<sequence length="427" mass="47740">MIDPKLLRGDLTDLQQQLATRGYTLDMAFWQSIENERKSLQVQTEELQSRRNAGAKQVGALKKSGEDTSELLADMQSVSGEIKTAEDELRTLQERINQAALQIPNIPAADVPVGASEDDNVEVRKWGTPREFDFEIKDHAHIGETLGMLDFEAAAKLTGSRFNVLKGQLAQMHRALIQFMLNTHTIKYGYTETYVPYIVNSESLKGTGQLPKFEGDLFKLINHTNNDDMDFYLIPTAEVPMTNLVRGERLDIKELPLKFTAHTPCFRSEAGSHGRDTRGLIRQHQFEKVEMVNIATAEQSDELLEAMTGQAEFILQQLNLPYRTVKLCTGDMGFAAQKTYDIEVWLPSQDTYREISSCSNCGDFQARRMGTRVKDGKQTSLVHTLNGSGLAVGRTLLAVMENYQNADGSITIPEVLRPFMGGADSIL</sequence>
<feature type="chain" id="PRO_1000019782" description="Serine--tRNA ligase">
    <location>
        <begin position="1"/>
        <end position="427"/>
    </location>
</feature>
<feature type="binding site" evidence="1">
    <location>
        <begin position="236"/>
        <end position="238"/>
    </location>
    <ligand>
        <name>L-serine</name>
        <dbReference type="ChEBI" id="CHEBI:33384"/>
    </ligand>
</feature>
<feature type="binding site" evidence="1">
    <location>
        <begin position="267"/>
        <end position="269"/>
    </location>
    <ligand>
        <name>ATP</name>
        <dbReference type="ChEBI" id="CHEBI:30616"/>
    </ligand>
</feature>
<feature type="binding site" evidence="1">
    <location>
        <position position="290"/>
    </location>
    <ligand>
        <name>L-serine</name>
        <dbReference type="ChEBI" id="CHEBI:33384"/>
    </ligand>
</feature>
<feature type="binding site" evidence="1">
    <location>
        <begin position="354"/>
        <end position="357"/>
    </location>
    <ligand>
        <name>ATP</name>
        <dbReference type="ChEBI" id="CHEBI:30616"/>
    </ligand>
</feature>
<feature type="binding site" evidence="1">
    <location>
        <position position="388"/>
    </location>
    <ligand>
        <name>L-serine</name>
        <dbReference type="ChEBI" id="CHEBI:33384"/>
    </ligand>
</feature>
<organism>
    <name type="scientific">Psychrobacter arcticus (strain DSM 17307 / VKM B-2377 / 273-4)</name>
    <dbReference type="NCBI Taxonomy" id="259536"/>
    <lineage>
        <taxon>Bacteria</taxon>
        <taxon>Pseudomonadati</taxon>
        <taxon>Pseudomonadota</taxon>
        <taxon>Gammaproteobacteria</taxon>
        <taxon>Moraxellales</taxon>
        <taxon>Moraxellaceae</taxon>
        <taxon>Psychrobacter</taxon>
    </lineage>
</organism>
<gene>
    <name evidence="1" type="primary">serS</name>
    <name type="ordered locus">Psyc_1618</name>
</gene>
<accession>Q4FR92</accession>
<evidence type="ECO:0000255" key="1">
    <source>
        <dbReference type="HAMAP-Rule" id="MF_00176"/>
    </source>
</evidence>
<protein>
    <recommendedName>
        <fullName evidence="1">Serine--tRNA ligase</fullName>
        <ecNumber evidence="1">6.1.1.11</ecNumber>
    </recommendedName>
    <alternativeName>
        <fullName evidence="1">Seryl-tRNA synthetase</fullName>
        <shortName evidence="1">SerRS</shortName>
    </alternativeName>
    <alternativeName>
        <fullName evidence="1">Seryl-tRNA(Ser/Sec) synthetase</fullName>
    </alternativeName>
</protein>
<comment type="function">
    <text evidence="1">Catalyzes the attachment of serine to tRNA(Ser). Is also able to aminoacylate tRNA(Sec) with serine, to form the misacylated tRNA L-seryl-tRNA(Sec), which will be further converted into selenocysteinyl-tRNA(Sec).</text>
</comment>
<comment type="catalytic activity">
    <reaction evidence="1">
        <text>tRNA(Ser) + L-serine + ATP = L-seryl-tRNA(Ser) + AMP + diphosphate + H(+)</text>
        <dbReference type="Rhea" id="RHEA:12292"/>
        <dbReference type="Rhea" id="RHEA-COMP:9669"/>
        <dbReference type="Rhea" id="RHEA-COMP:9703"/>
        <dbReference type="ChEBI" id="CHEBI:15378"/>
        <dbReference type="ChEBI" id="CHEBI:30616"/>
        <dbReference type="ChEBI" id="CHEBI:33019"/>
        <dbReference type="ChEBI" id="CHEBI:33384"/>
        <dbReference type="ChEBI" id="CHEBI:78442"/>
        <dbReference type="ChEBI" id="CHEBI:78533"/>
        <dbReference type="ChEBI" id="CHEBI:456215"/>
        <dbReference type="EC" id="6.1.1.11"/>
    </reaction>
</comment>
<comment type="catalytic activity">
    <reaction evidence="1">
        <text>tRNA(Sec) + L-serine + ATP = L-seryl-tRNA(Sec) + AMP + diphosphate + H(+)</text>
        <dbReference type="Rhea" id="RHEA:42580"/>
        <dbReference type="Rhea" id="RHEA-COMP:9742"/>
        <dbReference type="Rhea" id="RHEA-COMP:10128"/>
        <dbReference type="ChEBI" id="CHEBI:15378"/>
        <dbReference type="ChEBI" id="CHEBI:30616"/>
        <dbReference type="ChEBI" id="CHEBI:33019"/>
        <dbReference type="ChEBI" id="CHEBI:33384"/>
        <dbReference type="ChEBI" id="CHEBI:78442"/>
        <dbReference type="ChEBI" id="CHEBI:78533"/>
        <dbReference type="ChEBI" id="CHEBI:456215"/>
        <dbReference type="EC" id="6.1.1.11"/>
    </reaction>
</comment>
<comment type="pathway">
    <text evidence="1">Aminoacyl-tRNA biosynthesis; selenocysteinyl-tRNA(Sec) biosynthesis; L-seryl-tRNA(Sec) from L-serine and tRNA(Sec): step 1/1.</text>
</comment>
<comment type="subunit">
    <text evidence="1">Homodimer. The tRNA molecule binds across the dimer.</text>
</comment>
<comment type="subcellular location">
    <subcellularLocation>
        <location evidence="1">Cytoplasm</location>
    </subcellularLocation>
</comment>
<comment type="domain">
    <text evidence="1">Consists of two distinct domains, a catalytic core and a N-terminal extension that is involved in tRNA binding.</text>
</comment>
<comment type="similarity">
    <text evidence="1">Belongs to the class-II aminoacyl-tRNA synthetase family. Type-1 seryl-tRNA synthetase subfamily.</text>
</comment>
<proteinExistence type="inferred from homology"/>
<keyword id="KW-0030">Aminoacyl-tRNA synthetase</keyword>
<keyword id="KW-0067">ATP-binding</keyword>
<keyword id="KW-0963">Cytoplasm</keyword>
<keyword id="KW-0436">Ligase</keyword>
<keyword id="KW-0547">Nucleotide-binding</keyword>
<keyword id="KW-0648">Protein biosynthesis</keyword>
<keyword id="KW-1185">Reference proteome</keyword>